<comment type="function">
    <text evidence="1">3'-to-5' exoribonuclease specific for small oligoribonucleotides.</text>
</comment>
<comment type="subcellular location">
    <subcellularLocation>
        <location evidence="1">Cytoplasm</location>
    </subcellularLocation>
</comment>
<comment type="similarity">
    <text evidence="1">Belongs to the oligoribonuclease family.</text>
</comment>
<sequence>MAQDPNHLIWLDMEMTGLEPDRDRIIEIALVITDSQLNTIAEAPVIAVHQPESVLDAMDDWNKNTHGKSGLIDRVRASTVSEAEAEARMLAFLQEWVPARTSPMCGNSICQDRRFLARYMPAFEAWFHYRNLDVSTLKELAKRWRPEVYKGVDKKGKHEALADIHESIGELRHYRDNFLRLA</sequence>
<proteinExistence type="inferred from homology"/>
<gene>
    <name evidence="1" type="primary">orn</name>
    <name type="ordered locus">azo1518</name>
</gene>
<evidence type="ECO:0000255" key="1">
    <source>
        <dbReference type="HAMAP-Rule" id="MF_00045"/>
    </source>
</evidence>
<feature type="chain" id="PRO_1000004230" description="Oligoribonuclease">
    <location>
        <begin position="1"/>
        <end position="182"/>
    </location>
</feature>
<feature type="domain" description="Exonuclease" evidence="1">
    <location>
        <begin position="8"/>
        <end position="171"/>
    </location>
</feature>
<feature type="active site" evidence="1">
    <location>
        <position position="129"/>
    </location>
</feature>
<accession>A1K5N0</accession>
<name>ORN_AZOSB</name>
<dbReference type="EC" id="3.1.15.-" evidence="1"/>
<dbReference type="EMBL" id="AM406670">
    <property type="protein sequence ID" value="CAL94135.1"/>
    <property type="molecule type" value="Genomic_DNA"/>
</dbReference>
<dbReference type="RefSeq" id="WP_011765251.1">
    <property type="nucleotide sequence ID" value="NC_008702.1"/>
</dbReference>
<dbReference type="SMR" id="A1K5N0"/>
<dbReference type="STRING" id="62928.azo1518"/>
<dbReference type="KEGG" id="aoa:dqs_1641"/>
<dbReference type="KEGG" id="azo:azo1518"/>
<dbReference type="eggNOG" id="COG1949">
    <property type="taxonomic scope" value="Bacteria"/>
</dbReference>
<dbReference type="HOGENOM" id="CLU_064761_2_0_4"/>
<dbReference type="OrthoDB" id="9801329at2"/>
<dbReference type="Proteomes" id="UP000002588">
    <property type="component" value="Chromosome"/>
</dbReference>
<dbReference type="GO" id="GO:0005737">
    <property type="term" value="C:cytoplasm"/>
    <property type="evidence" value="ECO:0007669"/>
    <property type="project" value="UniProtKB-SubCell"/>
</dbReference>
<dbReference type="GO" id="GO:0000175">
    <property type="term" value="F:3'-5'-RNA exonuclease activity"/>
    <property type="evidence" value="ECO:0007669"/>
    <property type="project" value="InterPro"/>
</dbReference>
<dbReference type="GO" id="GO:0003676">
    <property type="term" value="F:nucleic acid binding"/>
    <property type="evidence" value="ECO:0007669"/>
    <property type="project" value="InterPro"/>
</dbReference>
<dbReference type="GO" id="GO:0006259">
    <property type="term" value="P:DNA metabolic process"/>
    <property type="evidence" value="ECO:0007669"/>
    <property type="project" value="UniProtKB-ARBA"/>
</dbReference>
<dbReference type="CDD" id="cd06135">
    <property type="entry name" value="Orn"/>
    <property type="match status" value="1"/>
</dbReference>
<dbReference type="FunFam" id="3.30.420.10:FF:000003">
    <property type="entry name" value="Oligoribonuclease"/>
    <property type="match status" value="1"/>
</dbReference>
<dbReference type="Gene3D" id="3.30.420.10">
    <property type="entry name" value="Ribonuclease H-like superfamily/Ribonuclease H"/>
    <property type="match status" value="1"/>
</dbReference>
<dbReference type="HAMAP" id="MF_00045">
    <property type="entry name" value="Oligoribonuclease"/>
    <property type="match status" value="1"/>
</dbReference>
<dbReference type="InterPro" id="IPR013520">
    <property type="entry name" value="Exonuclease_RNaseT/DNA_pol3"/>
</dbReference>
<dbReference type="InterPro" id="IPR022894">
    <property type="entry name" value="Oligoribonuclease"/>
</dbReference>
<dbReference type="InterPro" id="IPR012337">
    <property type="entry name" value="RNaseH-like_sf"/>
</dbReference>
<dbReference type="InterPro" id="IPR036397">
    <property type="entry name" value="RNaseH_sf"/>
</dbReference>
<dbReference type="NCBIfam" id="NF003765">
    <property type="entry name" value="PRK05359.1"/>
    <property type="match status" value="1"/>
</dbReference>
<dbReference type="PANTHER" id="PTHR11046">
    <property type="entry name" value="OLIGORIBONUCLEASE, MITOCHONDRIAL"/>
    <property type="match status" value="1"/>
</dbReference>
<dbReference type="PANTHER" id="PTHR11046:SF0">
    <property type="entry name" value="OLIGORIBONUCLEASE, MITOCHONDRIAL"/>
    <property type="match status" value="1"/>
</dbReference>
<dbReference type="Pfam" id="PF00929">
    <property type="entry name" value="RNase_T"/>
    <property type="match status" value="1"/>
</dbReference>
<dbReference type="SMART" id="SM00479">
    <property type="entry name" value="EXOIII"/>
    <property type="match status" value="1"/>
</dbReference>
<dbReference type="SUPFAM" id="SSF53098">
    <property type="entry name" value="Ribonuclease H-like"/>
    <property type="match status" value="1"/>
</dbReference>
<organism>
    <name type="scientific">Azoarcus sp. (strain BH72)</name>
    <dbReference type="NCBI Taxonomy" id="418699"/>
    <lineage>
        <taxon>Bacteria</taxon>
        <taxon>Pseudomonadati</taxon>
        <taxon>Pseudomonadota</taxon>
        <taxon>Betaproteobacteria</taxon>
        <taxon>Rhodocyclales</taxon>
        <taxon>Zoogloeaceae</taxon>
        <taxon>Azoarcus</taxon>
    </lineage>
</organism>
<protein>
    <recommendedName>
        <fullName evidence="1">Oligoribonuclease</fullName>
        <ecNumber evidence="1">3.1.15.-</ecNumber>
    </recommendedName>
</protein>
<reference key="1">
    <citation type="journal article" date="2006" name="Nat. Biotechnol.">
        <title>Complete genome of the mutualistic, N2-fixing grass endophyte Azoarcus sp. strain BH72.</title>
        <authorList>
            <person name="Krause A."/>
            <person name="Ramakumar A."/>
            <person name="Bartels D."/>
            <person name="Battistoni F."/>
            <person name="Bekel T."/>
            <person name="Boch J."/>
            <person name="Boehm M."/>
            <person name="Friedrich F."/>
            <person name="Hurek T."/>
            <person name="Krause L."/>
            <person name="Linke B."/>
            <person name="McHardy A.C."/>
            <person name="Sarkar A."/>
            <person name="Schneiker S."/>
            <person name="Syed A.A."/>
            <person name="Thauer R."/>
            <person name="Vorhoelter F.-J."/>
            <person name="Weidner S."/>
            <person name="Puehler A."/>
            <person name="Reinhold-Hurek B."/>
            <person name="Kaiser O."/>
            <person name="Goesmann A."/>
        </authorList>
    </citation>
    <scope>NUCLEOTIDE SEQUENCE [LARGE SCALE GENOMIC DNA]</scope>
    <source>
        <strain>BH72</strain>
    </source>
</reference>
<keyword id="KW-0963">Cytoplasm</keyword>
<keyword id="KW-0269">Exonuclease</keyword>
<keyword id="KW-0378">Hydrolase</keyword>
<keyword id="KW-0540">Nuclease</keyword>
<keyword id="KW-1185">Reference proteome</keyword>